<feature type="chain" id="PRO_0000112378" description="N-acetyl-gamma-glutamyl-phosphate reductase">
    <location>
        <begin position="1"/>
        <end position="344"/>
    </location>
</feature>
<feature type="active site" evidence="1">
    <location>
        <position position="147"/>
    </location>
</feature>
<protein>
    <recommendedName>
        <fullName evidence="1">N-acetyl-gamma-glutamyl-phosphate reductase</fullName>
        <shortName evidence="1">AGPR</shortName>
        <ecNumber evidence="1">1.2.1.38</ecNumber>
    </recommendedName>
    <alternativeName>
        <fullName evidence="1">N-acetyl-glutamate semialdehyde dehydrogenase</fullName>
        <shortName evidence="1">NAGSA dehydrogenase</shortName>
    </alternativeName>
</protein>
<dbReference type="EC" id="1.2.1.38" evidence="1"/>
<dbReference type="EMBL" id="AY248750">
    <property type="protein sequence ID" value="AAO72303.1"/>
    <property type="molecule type" value="Genomic_DNA"/>
</dbReference>
<dbReference type="SMR" id="Q846B4"/>
<dbReference type="UniPathway" id="UPA00068">
    <property type="reaction ID" value="UER00108"/>
</dbReference>
<dbReference type="GO" id="GO:0005737">
    <property type="term" value="C:cytoplasm"/>
    <property type="evidence" value="ECO:0007669"/>
    <property type="project" value="UniProtKB-SubCell"/>
</dbReference>
<dbReference type="GO" id="GO:0003942">
    <property type="term" value="F:N-acetyl-gamma-glutamyl-phosphate reductase activity"/>
    <property type="evidence" value="ECO:0007669"/>
    <property type="project" value="UniProtKB-UniRule"/>
</dbReference>
<dbReference type="GO" id="GO:0051287">
    <property type="term" value="F:NAD binding"/>
    <property type="evidence" value="ECO:0007669"/>
    <property type="project" value="InterPro"/>
</dbReference>
<dbReference type="GO" id="GO:0070401">
    <property type="term" value="F:NADP+ binding"/>
    <property type="evidence" value="ECO:0007669"/>
    <property type="project" value="InterPro"/>
</dbReference>
<dbReference type="GO" id="GO:0006526">
    <property type="term" value="P:L-arginine biosynthetic process"/>
    <property type="evidence" value="ECO:0007669"/>
    <property type="project" value="UniProtKB-UniRule"/>
</dbReference>
<dbReference type="CDD" id="cd23934">
    <property type="entry name" value="AGPR_1_C"/>
    <property type="match status" value="1"/>
</dbReference>
<dbReference type="CDD" id="cd17895">
    <property type="entry name" value="AGPR_1_N"/>
    <property type="match status" value="1"/>
</dbReference>
<dbReference type="FunFam" id="3.30.360.10:FF:000014">
    <property type="entry name" value="N-acetyl-gamma-glutamyl-phosphate reductase"/>
    <property type="match status" value="1"/>
</dbReference>
<dbReference type="Gene3D" id="3.30.360.10">
    <property type="entry name" value="Dihydrodipicolinate Reductase, domain 2"/>
    <property type="match status" value="1"/>
</dbReference>
<dbReference type="Gene3D" id="3.40.50.720">
    <property type="entry name" value="NAD(P)-binding Rossmann-like Domain"/>
    <property type="match status" value="1"/>
</dbReference>
<dbReference type="HAMAP" id="MF_00150">
    <property type="entry name" value="ArgC_type1"/>
    <property type="match status" value="1"/>
</dbReference>
<dbReference type="InterPro" id="IPR023013">
    <property type="entry name" value="AGPR_AS"/>
</dbReference>
<dbReference type="InterPro" id="IPR000706">
    <property type="entry name" value="AGPR_type-1"/>
</dbReference>
<dbReference type="InterPro" id="IPR036291">
    <property type="entry name" value="NAD(P)-bd_dom_sf"/>
</dbReference>
<dbReference type="InterPro" id="IPR050085">
    <property type="entry name" value="NAGSA_dehydrogenase"/>
</dbReference>
<dbReference type="InterPro" id="IPR000534">
    <property type="entry name" value="Semialdehyde_DH_NAD-bd"/>
</dbReference>
<dbReference type="NCBIfam" id="TIGR01850">
    <property type="entry name" value="argC"/>
    <property type="match status" value="1"/>
</dbReference>
<dbReference type="PANTHER" id="PTHR32338:SF10">
    <property type="entry name" value="N-ACETYL-GAMMA-GLUTAMYL-PHOSPHATE REDUCTASE, CHLOROPLASTIC-RELATED"/>
    <property type="match status" value="1"/>
</dbReference>
<dbReference type="PANTHER" id="PTHR32338">
    <property type="entry name" value="N-ACETYL-GAMMA-GLUTAMYL-PHOSPHATE REDUCTASE, CHLOROPLASTIC-RELATED-RELATED"/>
    <property type="match status" value="1"/>
</dbReference>
<dbReference type="Pfam" id="PF01118">
    <property type="entry name" value="Semialdhyde_dh"/>
    <property type="match status" value="1"/>
</dbReference>
<dbReference type="Pfam" id="PF22698">
    <property type="entry name" value="Semialdhyde_dhC_1"/>
    <property type="match status" value="1"/>
</dbReference>
<dbReference type="SMART" id="SM00859">
    <property type="entry name" value="Semialdhyde_dh"/>
    <property type="match status" value="1"/>
</dbReference>
<dbReference type="SUPFAM" id="SSF55347">
    <property type="entry name" value="Glyceraldehyde-3-phosphate dehydrogenase-like, C-terminal domain"/>
    <property type="match status" value="1"/>
</dbReference>
<dbReference type="SUPFAM" id="SSF51735">
    <property type="entry name" value="NAD(P)-binding Rossmann-fold domains"/>
    <property type="match status" value="1"/>
</dbReference>
<dbReference type="PROSITE" id="PS01224">
    <property type="entry name" value="ARGC"/>
    <property type="match status" value="1"/>
</dbReference>
<evidence type="ECO:0000255" key="1">
    <source>
        <dbReference type="HAMAP-Rule" id="MF_00150"/>
    </source>
</evidence>
<gene>
    <name evidence="1" type="primary">argC</name>
</gene>
<keyword id="KW-0028">Amino-acid biosynthesis</keyword>
<keyword id="KW-0055">Arginine biosynthesis</keyword>
<keyword id="KW-0963">Cytoplasm</keyword>
<keyword id="KW-0521">NADP</keyword>
<keyword id="KW-0560">Oxidoreductase</keyword>
<sequence length="344" mass="37925">MKIGFVGATGYGGTELVRILSHHPHAEECILYQTSGEGNVYSEGYPHLTGLADLKPIDMNTIKHEIDIMFLAAPPGVSSELTPKLADAWVTVIDLSGDLRIKEPAEYEKWYKRTAAPKAVIQEAVYGLAELNQLAIQQAKLIANPGCFPTAVLLGLAPLAKKKLLDESFVIVDAKTGVSGAGRKASMGTHFSELNDNFKIYKVNEHQHTPEIEQALNEWQPGLGPITFSAHLVPMTRGIMATMYTRLTCDLTADDLHDLYSEFYQDSYFVRVRPKGQYPQTKEVYGSNFCDIGVTLDERTNRVTIVSVIDNLMKGAAGQAVQNFNLMNGWDEETGLTIITPIYA</sequence>
<accession>Q846B4</accession>
<name>ARGC_BACAM</name>
<reference key="1">
    <citation type="submission" date="2003-03" db="EMBL/GenBank/DDBJ databases">
        <title>argC gene of Bacillus amyloliquefaciens.</title>
        <authorList>
            <person name="Min K.-H."/>
        </authorList>
    </citation>
    <scope>NUCLEOTIDE SEQUENCE [GENOMIC DNA]</scope>
</reference>
<proteinExistence type="inferred from homology"/>
<organism>
    <name type="scientific">Bacillus amyloliquefaciens</name>
    <name type="common">Bacillus velezensis</name>
    <dbReference type="NCBI Taxonomy" id="1390"/>
    <lineage>
        <taxon>Bacteria</taxon>
        <taxon>Bacillati</taxon>
        <taxon>Bacillota</taxon>
        <taxon>Bacilli</taxon>
        <taxon>Bacillales</taxon>
        <taxon>Bacillaceae</taxon>
        <taxon>Bacillus</taxon>
        <taxon>Bacillus amyloliquefaciens group</taxon>
    </lineage>
</organism>
<comment type="function">
    <text evidence="1">Catalyzes the NADPH-dependent reduction of N-acetyl-5-glutamyl phosphate to yield N-acetyl-L-glutamate 5-semialdehyde.</text>
</comment>
<comment type="catalytic activity">
    <reaction evidence="1">
        <text>N-acetyl-L-glutamate 5-semialdehyde + phosphate + NADP(+) = N-acetyl-L-glutamyl 5-phosphate + NADPH + H(+)</text>
        <dbReference type="Rhea" id="RHEA:21588"/>
        <dbReference type="ChEBI" id="CHEBI:15378"/>
        <dbReference type="ChEBI" id="CHEBI:29123"/>
        <dbReference type="ChEBI" id="CHEBI:43474"/>
        <dbReference type="ChEBI" id="CHEBI:57783"/>
        <dbReference type="ChEBI" id="CHEBI:57936"/>
        <dbReference type="ChEBI" id="CHEBI:58349"/>
        <dbReference type="EC" id="1.2.1.38"/>
    </reaction>
</comment>
<comment type="pathway">
    <text evidence="1">Amino-acid biosynthesis; L-arginine biosynthesis; N(2)-acetyl-L-ornithine from L-glutamate: step 3/4.</text>
</comment>
<comment type="subcellular location">
    <subcellularLocation>
        <location evidence="1">Cytoplasm</location>
    </subcellularLocation>
</comment>
<comment type="similarity">
    <text evidence="1">Belongs to the NAGSA dehydrogenase family. Type 1 subfamily.</text>
</comment>